<proteinExistence type="inferred from homology"/>
<sequence>MLMDKLTELLKLLQNTESIEINEFRMDVEELELYLMPAVQQAIQKTVEVREAVEALPAEEFNPPIRSYPGEVAQVKLGEGTRKSVYLGGQKALYRFEEPQPNPPVVTFDVFDIPMPGLPRPIREHFSDVMEDPGDWARKAVKEYGANMVTIHLIGTGPKVMDKSPREAAKDIEEVLQAVDVPLVIGGSGDPEKDPLVLEKAAEAAEGERCLLASANLDLDYRKVARAALDHNHAVLSWAITDVNMQKTLNRYLLKEGLKREDIVMDPTTCALGYGIEFSIDVITRTRLAALKGDSDLQMPMSSGTTNAWGSREAWMKKDEWGPTDYRGPLWEIVTGLTMMLSGVDIFMMLHPTSVRLLREIGETFTREYMTAETPDLREWITELDYQEV</sequence>
<reference key="1">
    <citation type="journal article" date="1997" name="J. Bacteriol.">
        <title>Complete genome sequence of Methanobacterium thermoautotrophicum deltaH: functional analysis and comparative genomics.</title>
        <authorList>
            <person name="Smith D.R."/>
            <person name="Doucette-Stamm L.A."/>
            <person name="Deloughery C."/>
            <person name="Lee H.-M."/>
            <person name="Dubois J."/>
            <person name="Aldredge T."/>
            <person name="Bashirzadeh R."/>
            <person name="Blakely D."/>
            <person name="Cook R."/>
            <person name="Gilbert K."/>
            <person name="Harrison D."/>
            <person name="Hoang L."/>
            <person name="Keagle P."/>
            <person name="Lumm W."/>
            <person name="Pothier B."/>
            <person name="Qiu D."/>
            <person name="Spadafora R."/>
            <person name="Vicare R."/>
            <person name="Wang Y."/>
            <person name="Wierzbowski J."/>
            <person name="Gibson R."/>
            <person name="Jiwani N."/>
            <person name="Caruso A."/>
            <person name="Bush D."/>
            <person name="Safer H."/>
            <person name="Patwell D."/>
            <person name="Prabhakar S."/>
            <person name="McDougall S."/>
            <person name="Shimer G."/>
            <person name="Goyal A."/>
            <person name="Pietrovski S."/>
            <person name="Church G.M."/>
            <person name="Daniels C.J."/>
            <person name="Mao J.-I."/>
            <person name="Rice P."/>
            <person name="Noelling J."/>
            <person name="Reeve J.N."/>
        </authorList>
    </citation>
    <scope>NUCLEOTIDE SEQUENCE [LARGE SCALE GENOMIC DNA]</scope>
    <source>
        <strain>ATCC 29096 / DSM 1053 / JCM 10044 / NBRC 100330 / Delta H</strain>
    </source>
</reference>
<feature type="chain" id="PRO_0000155117" description="Acetyl-CoA decarbonylase/synthase complex subunit delta">
    <location>
        <begin position="1"/>
        <end position="389"/>
    </location>
</feature>
<protein>
    <recommendedName>
        <fullName evidence="1">Acetyl-CoA decarbonylase/synthase complex subunit delta</fullName>
        <shortName evidence="1">ACDS complex subunit delta</shortName>
    </recommendedName>
    <alternativeName>
        <fullName evidence="1">Corrinoid/iron-sulfur component small subunit</fullName>
    </alternativeName>
</protein>
<accession>O27747</accession>
<comment type="function">
    <text evidence="1">Part of a complex that catalyzes the reversible cleavage of acetyl-CoA, allowing autotrophic growth from CO(2). Probably maintains the overall quaternary structure of the ACDS complex.</text>
</comment>
<comment type="subunit">
    <text evidence="1">Heterodimer of delta and gamma chains. The ACDS complex is made up of alpha, epsilon, beta, gamma and delta chains with a probable stoichiometry of (alpha(2)epsilon(2))(4)-beta(8)-(gamma(1)delta(1))(8).</text>
</comment>
<comment type="similarity">
    <text evidence="1">Belongs to the CdhD family.</text>
</comment>
<dbReference type="EMBL" id="AE000666">
    <property type="protein sequence ID" value="AAB86184.1"/>
    <property type="molecule type" value="Genomic_DNA"/>
</dbReference>
<dbReference type="PIR" id="B69096">
    <property type="entry name" value="B69096"/>
</dbReference>
<dbReference type="SMR" id="O27747"/>
<dbReference type="FunCoup" id="O27747">
    <property type="interactions" value="66"/>
</dbReference>
<dbReference type="STRING" id="187420.MTH_1712"/>
<dbReference type="PaxDb" id="187420-MTH_1712"/>
<dbReference type="EnsemblBacteria" id="AAB86184">
    <property type="protein sequence ID" value="AAB86184"/>
    <property type="gene ID" value="MTH_1712"/>
</dbReference>
<dbReference type="KEGG" id="mth:MTH_1712"/>
<dbReference type="PATRIC" id="fig|187420.15.peg.1673"/>
<dbReference type="HOGENOM" id="CLU_040403_0_0_2"/>
<dbReference type="InParanoid" id="O27747"/>
<dbReference type="Proteomes" id="UP000005223">
    <property type="component" value="Chromosome"/>
</dbReference>
<dbReference type="GO" id="GO:0006730">
    <property type="term" value="P:one-carbon metabolic process"/>
    <property type="evidence" value="ECO:0007669"/>
    <property type="project" value="InterPro"/>
</dbReference>
<dbReference type="Gene3D" id="3.20.20.20">
    <property type="entry name" value="Dihydropteroate synthase-like"/>
    <property type="match status" value="1"/>
</dbReference>
<dbReference type="HAMAP" id="MF_01135">
    <property type="entry name" value="CdhD"/>
    <property type="match status" value="1"/>
</dbReference>
<dbReference type="InterPro" id="IPR016041">
    <property type="entry name" value="Ac-CoA_synth_d_su_TIM-brl"/>
</dbReference>
<dbReference type="InterPro" id="IPR051069">
    <property type="entry name" value="ACDS_complex_subunit"/>
</dbReference>
<dbReference type="InterPro" id="IPR004486">
    <property type="entry name" value="CO_DH/Ac-CoA_synth_dsu"/>
</dbReference>
<dbReference type="InterPro" id="IPR011005">
    <property type="entry name" value="Dihydropteroate_synth-like_sf"/>
</dbReference>
<dbReference type="NCBIfam" id="TIGR00381">
    <property type="entry name" value="cdhD"/>
    <property type="match status" value="1"/>
</dbReference>
<dbReference type="NCBIfam" id="NF003375">
    <property type="entry name" value="PRK04452.1-1"/>
    <property type="match status" value="1"/>
</dbReference>
<dbReference type="NCBIfam" id="NF003378">
    <property type="entry name" value="PRK04452.1-4"/>
    <property type="match status" value="1"/>
</dbReference>
<dbReference type="PANTHER" id="PTHR36214">
    <property type="match status" value="1"/>
</dbReference>
<dbReference type="PANTHER" id="PTHR36214:SF5">
    <property type="entry name" value="ACETYL-COA DECARBONYLASE_SYNTHASE COMPLEX SUBUNIT DELTA"/>
    <property type="match status" value="1"/>
</dbReference>
<dbReference type="Pfam" id="PF03599">
    <property type="entry name" value="CdhD"/>
    <property type="match status" value="1"/>
</dbReference>
<dbReference type="SUPFAM" id="SSF51717">
    <property type="entry name" value="Dihydropteroate synthetase-like"/>
    <property type="match status" value="1"/>
</dbReference>
<gene>
    <name evidence="1" type="primary">cdhD</name>
    <name type="ordered locus">MTH_1712</name>
</gene>
<organism>
    <name type="scientific">Methanothermobacter thermautotrophicus (strain ATCC 29096 / DSM 1053 / JCM 10044 / NBRC 100330 / Delta H)</name>
    <name type="common">Methanobacterium thermoautotrophicum</name>
    <dbReference type="NCBI Taxonomy" id="187420"/>
    <lineage>
        <taxon>Archaea</taxon>
        <taxon>Methanobacteriati</taxon>
        <taxon>Methanobacteriota</taxon>
        <taxon>Methanomada group</taxon>
        <taxon>Methanobacteria</taxon>
        <taxon>Methanobacteriales</taxon>
        <taxon>Methanobacteriaceae</taxon>
        <taxon>Methanothermobacter</taxon>
    </lineage>
</organism>
<evidence type="ECO:0000255" key="1">
    <source>
        <dbReference type="HAMAP-Rule" id="MF_01135"/>
    </source>
</evidence>
<keyword id="KW-1185">Reference proteome</keyword>
<name>ACDD_METTH</name>